<organism>
    <name type="scientific">Helicobacter pylori (strain HPAG1)</name>
    <dbReference type="NCBI Taxonomy" id="357544"/>
    <lineage>
        <taxon>Bacteria</taxon>
        <taxon>Pseudomonadati</taxon>
        <taxon>Campylobacterota</taxon>
        <taxon>Epsilonproteobacteria</taxon>
        <taxon>Campylobacterales</taxon>
        <taxon>Helicobacteraceae</taxon>
        <taxon>Helicobacter</taxon>
    </lineage>
</organism>
<name>RS18_HELPH</name>
<gene>
    <name evidence="1" type="primary">rpsR</name>
    <name type="ordered locus">HPAG1_1187</name>
</gene>
<protein>
    <recommendedName>
        <fullName evidence="1">Small ribosomal subunit protein bS18</fullName>
    </recommendedName>
    <alternativeName>
        <fullName evidence="2">30S ribosomal protein S18</fullName>
    </alternativeName>
</protein>
<proteinExistence type="inferred from homology"/>
<feature type="chain" id="PRO_1000003509" description="Small ribosomal subunit protein bS18">
    <location>
        <begin position="1"/>
        <end position="85"/>
    </location>
</feature>
<sequence>MERKRYSKRYCKYTEAKISFIDYKDLDMLKHTLSERYKIMPRRLTGNSKKWQERVEVAIKRARHMALIPYIVDRKKVVDSPFKQH</sequence>
<accession>Q1CS18</accession>
<comment type="function">
    <text evidence="1">Binds as a heterodimer with protein bS6 to the central domain of the 16S rRNA, where it helps stabilize the platform of the 30S subunit.</text>
</comment>
<comment type="subunit">
    <text evidence="1">Part of the 30S ribosomal subunit. Forms a tight heterodimer with protein bS6.</text>
</comment>
<comment type="similarity">
    <text evidence="1">Belongs to the bacterial ribosomal protein bS18 family.</text>
</comment>
<reference key="1">
    <citation type="journal article" date="2006" name="Proc. Natl. Acad. Sci. U.S.A.">
        <title>The complete genome sequence of a chronic atrophic gastritis Helicobacter pylori strain: evolution during disease progression.</title>
        <authorList>
            <person name="Oh J.D."/>
            <person name="Kling-Baeckhed H."/>
            <person name="Giannakis M."/>
            <person name="Xu J."/>
            <person name="Fulton R.S."/>
            <person name="Fulton L.A."/>
            <person name="Cordum H.S."/>
            <person name="Wang C."/>
            <person name="Elliott G."/>
            <person name="Edwards J."/>
            <person name="Mardis E.R."/>
            <person name="Engstrand L.G."/>
            <person name="Gordon J.I."/>
        </authorList>
    </citation>
    <scope>NUCLEOTIDE SEQUENCE [LARGE SCALE GENOMIC DNA]</scope>
    <source>
        <strain>HPAG1</strain>
    </source>
</reference>
<keyword id="KW-0687">Ribonucleoprotein</keyword>
<keyword id="KW-0689">Ribosomal protein</keyword>
<keyword id="KW-0694">RNA-binding</keyword>
<keyword id="KW-0699">rRNA-binding</keyword>
<dbReference type="EMBL" id="CP000241">
    <property type="protein sequence ID" value="ABF85254.1"/>
    <property type="molecule type" value="Genomic_DNA"/>
</dbReference>
<dbReference type="RefSeq" id="WP_000440196.1">
    <property type="nucleotide sequence ID" value="NC_008086.1"/>
</dbReference>
<dbReference type="SMR" id="Q1CS18"/>
<dbReference type="KEGG" id="hpa:HPAG1_1187"/>
<dbReference type="HOGENOM" id="CLU_148710_2_2_7"/>
<dbReference type="GO" id="GO:0022627">
    <property type="term" value="C:cytosolic small ribosomal subunit"/>
    <property type="evidence" value="ECO:0007669"/>
    <property type="project" value="TreeGrafter"/>
</dbReference>
<dbReference type="GO" id="GO:0070181">
    <property type="term" value="F:small ribosomal subunit rRNA binding"/>
    <property type="evidence" value="ECO:0007669"/>
    <property type="project" value="TreeGrafter"/>
</dbReference>
<dbReference type="GO" id="GO:0003735">
    <property type="term" value="F:structural constituent of ribosome"/>
    <property type="evidence" value="ECO:0007669"/>
    <property type="project" value="InterPro"/>
</dbReference>
<dbReference type="GO" id="GO:0006412">
    <property type="term" value="P:translation"/>
    <property type="evidence" value="ECO:0007669"/>
    <property type="project" value="UniProtKB-UniRule"/>
</dbReference>
<dbReference type="FunFam" id="4.10.640.10:FF:000005">
    <property type="entry name" value="30S ribosomal protein S18"/>
    <property type="match status" value="1"/>
</dbReference>
<dbReference type="Gene3D" id="4.10.640.10">
    <property type="entry name" value="Ribosomal protein S18"/>
    <property type="match status" value="1"/>
</dbReference>
<dbReference type="HAMAP" id="MF_00270">
    <property type="entry name" value="Ribosomal_bS18"/>
    <property type="match status" value="1"/>
</dbReference>
<dbReference type="InterPro" id="IPR001648">
    <property type="entry name" value="Ribosomal_bS18"/>
</dbReference>
<dbReference type="InterPro" id="IPR018275">
    <property type="entry name" value="Ribosomal_bS18_CS"/>
</dbReference>
<dbReference type="InterPro" id="IPR036870">
    <property type="entry name" value="Ribosomal_bS18_sf"/>
</dbReference>
<dbReference type="NCBIfam" id="TIGR00165">
    <property type="entry name" value="S18"/>
    <property type="match status" value="1"/>
</dbReference>
<dbReference type="PANTHER" id="PTHR13479">
    <property type="entry name" value="30S RIBOSOMAL PROTEIN S18"/>
    <property type="match status" value="1"/>
</dbReference>
<dbReference type="PANTHER" id="PTHR13479:SF40">
    <property type="entry name" value="SMALL RIBOSOMAL SUBUNIT PROTEIN BS18M"/>
    <property type="match status" value="1"/>
</dbReference>
<dbReference type="Pfam" id="PF01084">
    <property type="entry name" value="Ribosomal_S18"/>
    <property type="match status" value="1"/>
</dbReference>
<dbReference type="PRINTS" id="PR00974">
    <property type="entry name" value="RIBOSOMALS18"/>
</dbReference>
<dbReference type="SUPFAM" id="SSF46911">
    <property type="entry name" value="Ribosomal protein S18"/>
    <property type="match status" value="1"/>
</dbReference>
<dbReference type="PROSITE" id="PS00057">
    <property type="entry name" value="RIBOSOMAL_S18"/>
    <property type="match status" value="1"/>
</dbReference>
<evidence type="ECO:0000255" key="1">
    <source>
        <dbReference type="HAMAP-Rule" id="MF_00270"/>
    </source>
</evidence>
<evidence type="ECO:0000305" key="2"/>